<feature type="chain" id="PRO_0000292157" description="Probable lipid kinase YegS">
    <location>
        <begin position="1"/>
        <end position="299"/>
    </location>
</feature>
<feature type="domain" description="DAGKc">
    <location>
        <begin position="2"/>
        <end position="133"/>
    </location>
</feature>
<feature type="active site" description="Proton acceptor" evidence="1">
    <location>
        <position position="271"/>
    </location>
</feature>
<feature type="binding site" evidence="1">
    <location>
        <position position="40"/>
    </location>
    <ligand>
        <name>ATP</name>
        <dbReference type="ChEBI" id="CHEBI:30616"/>
    </ligand>
</feature>
<feature type="binding site" evidence="1">
    <location>
        <begin position="66"/>
        <end position="72"/>
    </location>
    <ligand>
        <name>ATP</name>
        <dbReference type="ChEBI" id="CHEBI:30616"/>
    </ligand>
</feature>
<feature type="binding site" evidence="1">
    <location>
        <position position="95"/>
    </location>
    <ligand>
        <name>ATP</name>
        <dbReference type="ChEBI" id="CHEBI:30616"/>
    </ligand>
</feature>
<feature type="binding site">
    <location>
        <position position="125"/>
    </location>
    <ligand>
        <name>Ca(2+)</name>
        <dbReference type="ChEBI" id="CHEBI:29108"/>
        <label>1</label>
    </ligand>
</feature>
<feature type="binding site">
    <location>
        <position position="200"/>
    </location>
    <ligand>
        <name>Ca(2+)</name>
        <dbReference type="ChEBI" id="CHEBI:29108"/>
        <label>1</label>
    </ligand>
</feature>
<feature type="binding site">
    <location>
        <position position="215"/>
    </location>
    <ligand>
        <name>Ca(2+)</name>
        <dbReference type="ChEBI" id="CHEBI:29108"/>
        <label>1</label>
    </ligand>
</feature>
<feature type="binding site">
    <location>
        <position position="218"/>
    </location>
    <ligand>
        <name>Ca(2+)</name>
        <dbReference type="ChEBI" id="CHEBI:29108"/>
        <label>1</label>
    </ligand>
</feature>
<feature type="binding site">
    <location>
        <position position="220"/>
    </location>
    <ligand>
        <name>Ca(2+)</name>
        <dbReference type="ChEBI" id="CHEBI:29108"/>
        <label>1</label>
    </ligand>
</feature>
<feature type="binding site">
    <location>
        <position position="242"/>
    </location>
    <ligand>
        <name>Ca(2+)</name>
        <dbReference type="ChEBI" id="CHEBI:29108"/>
        <label>2</label>
    </ligand>
</feature>
<feature type="binding site">
    <location>
        <position position="243"/>
    </location>
    <ligand>
        <name>Ca(2+)</name>
        <dbReference type="ChEBI" id="CHEBI:29108"/>
        <label>2</label>
    </ligand>
</feature>
<feature type="binding site">
    <location>
        <position position="245"/>
    </location>
    <ligand>
        <name>Ca(2+)</name>
        <dbReference type="ChEBI" id="CHEBI:29108"/>
        <label>2</label>
    </ligand>
</feature>
<feature type="binding site">
    <location>
        <position position="248"/>
    </location>
    <ligand>
        <name>Ca(2+)</name>
        <dbReference type="ChEBI" id="CHEBI:29108"/>
        <label>2</label>
    </ligand>
</feature>
<feature type="strand" evidence="4">
    <location>
        <begin position="7"/>
        <end position="12"/>
    </location>
</feature>
<feature type="helix" evidence="4">
    <location>
        <begin position="13"/>
        <end position="15"/>
    </location>
</feature>
<feature type="helix" evidence="4">
    <location>
        <begin position="19"/>
        <end position="30"/>
    </location>
</feature>
<feature type="strand" evidence="4">
    <location>
        <begin position="35"/>
        <end position="40"/>
    </location>
</feature>
<feature type="helix" evidence="4">
    <location>
        <begin position="45"/>
        <end position="55"/>
    </location>
</feature>
<feature type="strand" evidence="4">
    <location>
        <begin position="59"/>
        <end position="66"/>
    </location>
</feature>
<feature type="helix" evidence="4">
    <location>
        <begin position="67"/>
        <end position="77"/>
    </location>
</feature>
<feature type="strand" evidence="4">
    <location>
        <begin position="87"/>
        <end position="90"/>
    </location>
</feature>
<feature type="helix" evidence="4">
    <location>
        <begin position="98"/>
        <end position="103"/>
    </location>
</feature>
<feature type="helix" evidence="4">
    <location>
        <begin position="109"/>
        <end position="118"/>
    </location>
</feature>
<feature type="strand" evidence="4">
    <location>
        <begin position="121"/>
        <end position="124"/>
    </location>
</feature>
<feature type="strand" evidence="4">
    <location>
        <begin position="127"/>
        <end position="129"/>
    </location>
</feature>
<feature type="turn" evidence="4">
    <location>
        <begin position="130"/>
        <end position="132"/>
    </location>
</feature>
<feature type="strand" evidence="4">
    <location>
        <begin position="133"/>
        <end position="142"/>
    </location>
</feature>
<feature type="strand" evidence="4">
    <location>
        <begin position="144"/>
        <end position="146"/>
    </location>
</feature>
<feature type="helix" evidence="4">
    <location>
        <begin position="161"/>
        <end position="167"/>
    </location>
</feature>
<feature type="strand" evidence="4">
    <location>
        <begin position="172"/>
        <end position="175"/>
    </location>
</feature>
<feature type="strand" evidence="4">
    <location>
        <begin position="178"/>
        <end position="184"/>
    </location>
</feature>
<feature type="strand" evidence="4">
    <location>
        <begin position="187"/>
        <end position="204"/>
    </location>
</feature>
<feature type="turn" evidence="4">
    <location>
        <begin position="205"/>
        <end position="207"/>
    </location>
</feature>
<feature type="strand" evidence="4">
    <location>
        <begin position="208"/>
        <end position="211"/>
    </location>
</feature>
<feature type="strand" evidence="4">
    <location>
        <begin position="221"/>
        <end position="226"/>
    </location>
</feature>
<feature type="helix" evidence="4">
    <location>
        <begin position="232"/>
        <end position="235"/>
    </location>
</feature>
<feature type="helix" evidence="4">
    <location>
        <begin position="239"/>
        <end position="244"/>
    </location>
</feature>
<feature type="strand" evidence="4">
    <location>
        <begin position="248"/>
        <end position="268"/>
    </location>
</feature>
<feature type="strand" evidence="4">
    <location>
        <begin position="271"/>
        <end position="282"/>
    </location>
</feature>
<feature type="strand" evidence="4">
    <location>
        <begin position="287"/>
        <end position="290"/>
    </location>
</feature>
<accession>Q8ZNP1</accession>
<protein>
    <recommendedName>
        <fullName>Probable lipid kinase YegS</fullName>
        <ecNumber>2.7.1.-</ecNumber>
    </recommendedName>
</protein>
<gene>
    <name type="primary">yegS</name>
    <name type="ordered locus">STM2140</name>
</gene>
<proteinExistence type="evidence at protein level"/>
<comment type="function">
    <text evidence="2">In vitro does not phosphorylate diacylglycerol, sphingosine, N,N-dimethylsphingosine; threo-dihydrosphingosine, erythro-dihydrosphingosine, C2 ceramide, C6 ceramide, phosphatidylinositol or dimethylsphingosine. The potential in vivo substrate is unknown.</text>
</comment>
<comment type="cofactor">
    <cofactor evidence="2 3">
        <name>Mg(2+)</name>
        <dbReference type="ChEBI" id="CHEBI:18420"/>
    </cofactor>
    <cofactor evidence="2 3">
        <name>Ca(2+)</name>
        <dbReference type="ChEBI" id="CHEBI:29108"/>
    </cofactor>
    <text evidence="2 3">Binds 1 Mg(2+) ion per subunit. Ca(2+) may be able to substitute. 2 Ca(2+) ions are seen in the crystal structure; one of the two occupies the same site as Mg(2+) in other family members.</text>
</comment>
<comment type="subunit">
    <text evidence="2">Homodimer. May interact with the periplasmic chaperone Skp (also known as OmpH); this suggests the protein may be translocated to the periplasm and then sorted to the outer membrane.</text>
</comment>
<comment type="similarity">
    <text evidence="3">Belongs to the diacylglycerol/lipid kinase family. YegS lipid kinase subfamily.</text>
</comment>
<dbReference type="EC" id="2.7.1.-"/>
<dbReference type="EMBL" id="AE006468">
    <property type="protein sequence ID" value="AAL21043.1"/>
    <property type="molecule type" value="Genomic_DNA"/>
</dbReference>
<dbReference type="RefSeq" id="NP_461084.1">
    <property type="nucleotide sequence ID" value="NC_003197.2"/>
</dbReference>
<dbReference type="RefSeq" id="WP_001273389.1">
    <property type="nucleotide sequence ID" value="NC_003197.2"/>
</dbReference>
<dbReference type="PDB" id="2P1R">
    <property type="method" value="X-ray"/>
    <property type="resolution" value="2.50 A"/>
    <property type="chains" value="A/B/C/D=1-299"/>
</dbReference>
<dbReference type="PDBsum" id="2P1R"/>
<dbReference type="SMR" id="Q8ZNP1"/>
<dbReference type="STRING" id="99287.STM2140"/>
<dbReference type="PaxDb" id="99287-STM2140"/>
<dbReference type="GeneID" id="1253661"/>
<dbReference type="KEGG" id="stm:STM2140"/>
<dbReference type="PATRIC" id="fig|99287.12.peg.2265"/>
<dbReference type="HOGENOM" id="CLU_045532_1_1_6"/>
<dbReference type="OMA" id="YFMNIAA"/>
<dbReference type="PhylomeDB" id="Q8ZNP1"/>
<dbReference type="BioCyc" id="SENT99287:STM2140-MONOMER"/>
<dbReference type="EvolutionaryTrace" id="Q8ZNP1"/>
<dbReference type="Proteomes" id="UP000001014">
    <property type="component" value="Chromosome"/>
</dbReference>
<dbReference type="GO" id="GO:0005737">
    <property type="term" value="C:cytoplasm"/>
    <property type="evidence" value="ECO:0007669"/>
    <property type="project" value="UniProtKB-UniRule"/>
</dbReference>
<dbReference type="GO" id="GO:0005524">
    <property type="term" value="F:ATP binding"/>
    <property type="evidence" value="ECO:0007669"/>
    <property type="project" value="UniProtKB-UniRule"/>
</dbReference>
<dbReference type="GO" id="GO:0001727">
    <property type="term" value="F:lipid kinase activity"/>
    <property type="evidence" value="ECO:0007669"/>
    <property type="project" value="UniProtKB-UniRule"/>
</dbReference>
<dbReference type="GO" id="GO:0000287">
    <property type="term" value="F:magnesium ion binding"/>
    <property type="evidence" value="ECO:0007669"/>
    <property type="project" value="UniProtKB-UniRule"/>
</dbReference>
<dbReference type="GO" id="GO:0008654">
    <property type="term" value="P:phospholipid biosynthetic process"/>
    <property type="evidence" value="ECO:0007669"/>
    <property type="project" value="UniProtKB-UniRule"/>
</dbReference>
<dbReference type="FunFam" id="3.40.50.10330:FF:000008">
    <property type="entry name" value="Probable lipid kinase YegS"/>
    <property type="match status" value="1"/>
</dbReference>
<dbReference type="Gene3D" id="2.60.200.40">
    <property type="match status" value="1"/>
</dbReference>
<dbReference type="Gene3D" id="3.40.50.10330">
    <property type="entry name" value="Probable inorganic polyphosphate/atp-NAD kinase, domain 1"/>
    <property type="match status" value="1"/>
</dbReference>
<dbReference type="HAMAP" id="MF_01377">
    <property type="entry name" value="YegS"/>
    <property type="match status" value="1"/>
</dbReference>
<dbReference type="InterPro" id="IPR017438">
    <property type="entry name" value="ATP-NAD_kinase_N"/>
</dbReference>
<dbReference type="InterPro" id="IPR005218">
    <property type="entry name" value="Diacylglycerol/lipid_kinase"/>
</dbReference>
<dbReference type="InterPro" id="IPR001206">
    <property type="entry name" value="Diacylglycerol_kinase_cat_dom"/>
</dbReference>
<dbReference type="InterPro" id="IPR022433">
    <property type="entry name" value="Lip_kinase_YegS"/>
</dbReference>
<dbReference type="InterPro" id="IPR050187">
    <property type="entry name" value="Lipid_Phosphate_FormReg"/>
</dbReference>
<dbReference type="InterPro" id="IPR016064">
    <property type="entry name" value="NAD/diacylglycerol_kinase_sf"/>
</dbReference>
<dbReference type="InterPro" id="IPR045540">
    <property type="entry name" value="YegS/DAGK_C"/>
</dbReference>
<dbReference type="NCBIfam" id="TIGR03702">
    <property type="entry name" value="lip_kinase_YegS"/>
    <property type="match status" value="1"/>
</dbReference>
<dbReference type="NCBIfam" id="NF009602">
    <property type="entry name" value="PRK13054.1"/>
    <property type="match status" value="1"/>
</dbReference>
<dbReference type="NCBIfam" id="TIGR00147">
    <property type="entry name" value="YegS/Rv2252/BmrU family lipid kinase"/>
    <property type="match status" value="1"/>
</dbReference>
<dbReference type="PANTHER" id="PTHR12358:SF106">
    <property type="entry name" value="LIPID KINASE YEGS"/>
    <property type="match status" value="1"/>
</dbReference>
<dbReference type="PANTHER" id="PTHR12358">
    <property type="entry name" value="SPHINGOSINE KINASE"/>
    <property type="match status" value="1"/>
</dbReference>
<dbReference type="Pfam" id="PF00781">
    <property type="entry name" value="DAGK_cat"/>
    <property type="match status" value="1"/>
</dbReference>
<dbReference type="Pfam" id="PF19279">
    <property type="entry name" value="YegS_C"/>
    <property type="match status" value="1"/>
</dbReference>
<dbReference type="SMART" id="SM00046">
    <property type="entry name" value="DAGKc"/>
    <property type="match status" value="1"/>
</dbReference>
<dbReference type="SUPFAM" id="SSF111331">
    <property type="entry name" value="NAD kinase/diacylglycerol kinase-like"/>
    <property type="match status" value="1"/>
</dbReference>
<dbReference type="PROSITE" id="PS50146">
    <property type="entry name" value="DAGK"/>
    <property type="match status" value="1"/>
</dbReference>
<sequence>MANFPASLLILNGKSADNQPLREAITLLRDEGIQIHVRVTWEKGDAQRYVDEARRLGVETVIAGGGDGTINEVSTALIQIRDGVAPALGLLPLGTANDFATSAGIPEALDKALKLAIAGNAMEIDMAMVNDKTCFINMATGGFGTRITTETPEKLKAALGGVSYLIHGLMRMDTLTPDRCEIRGENFHWQGDALVIGIGNGRQAGGGQQLCPTALINDGLLQLRIFTGEELLPALFSTLTQSDDNPNIIDGASAWFDIHAPHEITFNLDGEPLSGQEFHIEVLPGALRCRLPPDCPLLR</sequence>
<name>YEGS_SALTY</name>
<keyword id="KW-0002">3D-structure</keyword>
<keyword id="KW-0067">ATP-binding</keyword>
<keyword id="KW-0106">Calcium</keyword>
<keyword id="KW-0418">Kinase</keyword>
<keyword id="KW-0444">Lipid biosynthesis</keyword>
<keyword id="KW-0443">Lipid metabolism</keyword>
<keyword id="KW-0460">Magnesium</keyword>
<keyword id="KW-0479">Metal-binding</keyword>
<keyword id="KW-0547">Nucleotide-binding</keyword>
<keyword id="KW-0594">Phospholipid biosynthesis</keyword>
<keyword id="KW-1208">Phospholipid metabolism</keyword>
<keyword id="KW-1185">Reference proteome</keyword>
<keyword id="KW-0808">Transferase</keyword>
<reference key="1">
    <citation type="journal article" date="2001" name="Nature">
        <title>Complete genome sequence of Salmonella enterica serovar Typhimurium LT2.</title>
        <authorList>
            <person name="McClelland M."/>
            <person name="Sanderson K.E."/>
            <person name="Spieth J."/>
            <person name="Clifton S.W."/>
            <person name="Latreille P."/>
            <person name="Courtney L."/>
            <person name="Porwollik S."/>
            <person name="Ali J."/>
            <person name="Dante M."/>
            <person name="Du F."/>
            <person name="Hou S."/>
            <person name="Layman D."/>
            <person name="Leonard S."/>
            <person name="Nguyen C."/>
            <person name="Scott K."/>
            <person name="Holmes A."/>
            <person name="Grewal N."/>
            <person name="Mulvaney E."/>
            <person name="Ryan E."/>
            <person name="Sun H."/>
            <person name="Florea L."/>
            <person name="Miller W."/>
            <person name="Stoneking T."/>
            <person name="Nhan M."/>
            <person name="Waterston R."/>
            <person name="Wilson R.K."/>
        </authorList>
    </citation>
    <scope>NUCLEOTIDE SEQUENCE [LARGE SCALE GENOMIC DNA]</scope>
    <source>
        <strain>LT2 / SGSC1412 / ATCC 700720</strain>
    </source>
</reference>
<reference key="2">
    <citation type="journal article" date="2007" name="Proteins">
        <title>Characterization of Salmonella typhimurium yegS, a putative lipid kinase homologous to eukaryotic sphingosine and diacylglycerol kinases.</title>
        <authorList>
            <person name="Nichols C.E."/>
            <person name="Lamb H.K."/>
            <person name="Lockyer M."/>
            <person name="Charles I.G."/>
            <person name="Pyne S."/>
            <person name="Hawkins A.R."/>
            <person name="Stammers D.K."/>
        </authorList>
    </citation>
    <scope>X-RAY CRYSTALLOGRAPHY (2.60 ANGSTROMS)</scope>
    <scope>FUNCTION</scope>
    <scope>COFACTOR</scope>
    <scope>SUBUNIT</scope>
    <scope>POSSIBLE INTERACTION WITH SKP</scope>
    <source>
        <strain>SL3261</strain>
    </source>
</reference>
<organism>
    <name type="scientific">Salmonella typhimurium (strain LT2 / SGSC1412 / ATCC 700720)</name>
    <dbReference type="NCBI Taxonomy" id="99287"/>
    <lineage>
        <taxon>Bacteria</taxon>
        <taxon>Pseudomonadati</taxon>
        <taxon>Pseudomonadota</taxon>
        <taxon>Gammaproteobacteria</taxon>
        <taxon>Enterobacterales</taxon>
        <taxon>Enterobacteriaceae</taxon>
        <taxon>Salmonella</taxon>
    </lineage>
</organism>
<evidence type="ECO:0000250" key="1"/>
<evidence type="ECO:0000269" key="2">
    <source>
    </source>
</evidence>
<evidence type="ECO:0000305" key="3"/>
<evidence type="ECO:0007829" key="4">
    <source>
        <dbReference type="PDB" id="2P1R"/>
    </source>
</evidence>